<keyword id="KW-0227">DNA damage</keyword>
<keyword id="KW-0233">DNA recombination</keyword>
<keyword id="KW-0234">DNA repair</keyword>
<accession>B3EI06</accession>
<sequence>MIVKTRAVVLREIKYRDQSKICTLFTSEFGKLTAILKGGRNPKSRLSGKFSAGNVLDIVLYKKNGRDIQLISDGSLLFSPLSAEPDMERFATMYRIIDLISQALEGEEKNLPLFSLLTGVLEILYSTEERFELLFIWFLLRMISTLGFEPSLDRCVYSGEPLSAAAETMMLRELSFVMNPGGVALPAAALRQISQQHSITMPAYRLLSELSSTPLSALDEVDAGKAETEFLCKLLQEYCRLHLDHTPRNRNLAVVAQMLSK</sequence>
<reference key="1">
    <citation type="submission" date="2008-05" db="EMBL/GenBank/DDBJ databases">
        <title>Complete sequence of Chlorobium limicola DSM 245.</title>
        <authorList>
            <consortium name="US DOE Joint Genome Institute"/>
            <person name="Lucas S."/>
            <person name="Copeland A."/>
            <person name="Lapidus A."/>
            <person name="Glavina del Rio T."/>
            <person name="Dalin E."/>
            <person name="Tice H."/>
            <person name="Bruce D."/>
            <person name="Goodwin L."/>
            <person name="Pitluck S."/>
            <person name="Schmutz J."/>
            <person name="Larimer F."/>
            <person name="Land M."/>
            <person name="Hauser L."/>
            <person name="Kyrpides N."/>
            <person name="Ovchinnikova G."/>
            <person name="Zhao F."/>
            <person name="Li T."/>
            <person name="Liu Z."/>
            <person name="Overmann J."/>
            <person name="Bryant D.A."/>
            <person name="Richardson P."/>
        </authorList>
    </citation>
    <scope>NUCLEOTIDE SEQUENCE [LARGE SCALE GENOMIC DNA]</scope>
    <source>
        <strain>DSM 245 / NBRC 103803 / 6330</strain>
    </source>
</reference>
<gene>
    <name evidence="1" type="primary">recO</name>
    <name type="ordered locus">Clim_2393</name>
</gene>
<evidence type="ECO:0000255" key="1">
    <source>
        <dbReference type="HAMAP-Rule" id="MF_00201"/>
    </source>
</evidence>
<dbReference type="EMBL" id="CP001097">
    <property type="protein sequence ID" value="ACD91415.1"/>
    <property type="molecule type" value="Genomic_DNA"/>
</dbReference>
<dbReference type="RefSeq" id="WP_012467280.1">
    <property type="nucleotide sequence ID" value="NC_010803.1"/>
</dbReference>
<dbReference type="SMR" id="B3EI06"/>
<dbReference type="STRING" id="290315.Clim_2393"/>
<dbReference type="KEGG" id="cli:Clim_2393"/>
<dbReference type="eggNOG" id="COG1381">
    <property type="taxonomic scope" value="Bacteria"/>
</dbReference>
<dbReference type="HOGENOM" id="CLU_066632_1_0_10"/>
<dbReference type="OrthoDB" id="9789152at2"/>
<dbReference type="Proteomes" id="UP000008841">
    <property type="component" value="Chromosome"/>
</dbReference>
<dbReference type="GO" id="GO:0043590">
    <property type="term" value="C:bacterial nucleoid"/>
    <property type="evidence" value="ECO:0007669"/>
    <property type="project" value="TreeGrafter"/>
</dbReference>
<dbReference type="GO" id="GO:0006310">
    <property type="term" value="P:DNA recombination"/>
    <property type="evidence" value="ECO:0007669"/>
    <property type="project" value="UniProtKB-UniRule"/>
</dbReference>
<dbReference type="GO" id="GO:0006302">
    <property type="term" value="P:double-strand break repair"/>
    <property type="evidence" value="ECO:0007669"/>
    <property type="project" value="TreeGrafter"/>
</dbReference>
<dbReference type="Gene3D" id="2.40.50.140">
    <property type="entry name" value="Nucleic acid-binding proteins"/>
    <property type="match status" value="1"/>
</dbReference>
<dbReference type="Gene3D" id="1.20.1440.120">
    <property type="entry name" value="Recombination protein O, C-terminal domain"/>
    <property type="match status" value="1"/>
</dbReference>
<dbReference type="HAMAP" id="MF_00201">
    <property type="entry name" value="RecO"/>
    <property type="match status" value="1"/>
</dbReference>
<dbReference type="InterPro" id="IPR037278">
    <property type="entry name" value="ARFGAP/RecO"/>
</dbReference>
<dbReference type="InterPro" id="IPR022572">
    <property type="entry name" value="DNA_rep/recomb_RecO_N"/>
</dbReference>
<dbReference type="InterPro" id="IPR012340">
    <property type="entry name" value="NA-bd_OB-fold"/>
</dbReference>
<dbReference type="InterPro" id="IPR003717">
    <property type="entry name" value="RecO"/>
</dbReference>
<dbReference type="InterPro" id="IPR042242">
    <property type="entry name" value="RecO_C"/>
</dbReference>
<dbReference type="NCBIfam" id="TIGR00613">
    <property type="entry name" value="reco"/>
    <property type="match status" value="1"/>
</dbReference>
<dbReference type="PANTHER" id="PTHR33991">
    <property type="entry name" value="DNA REPAIR PROTEIN RECO"/>
    <property type="match status" value="1"/>
</dbReference>
<dbReference type="PANTHER" id="PTHR33991:SF1">
    <property type="entry name" value="DNA REPAIR PROTEIN RECO"/>
    <property type="match status" value="1"/>
</dbReference>
<dbReference type="Pfam" id="PF02565">
    <property type="entry name" value="RecO_C"/>
    <property type="match status" value="1"/>
</dbReference>
<dbReference type="Pfam" id="PF11967">
    <property type="entry name" value="RecO_N"/>
    <property type="match status" value="1"/>
</dbReference>
<dbReference type="SUPFAM" id="SSF57863">
    <property type="entry name" value="ArfGap/RecO-like zinc finger"/>
    <property type="match status" value="1"/>
</dbReference>
<dbReference type="SUPFAM" id="SSF50249">
    <property type="entry name" value="Nucleic acid-binding proteins"/>
    <property type="match status" value="1"/>
</dbReference>
<proteinExistence type="inferred from homology"/>
<organism>
    <name type="scientific">Chlorobium limicola (strain DSM 245 / NBRC 103803 / 6330)</name>
    <dbReference type="NCBI Taxonomy" id="290315"/>
    <lineage>
        <taxon>Bacteria</taxon>
        <taxon>Pseudomonadati</taxon>
        <taxon>Chlorobiota</taxon>
        <taxon>Chlorobiia</taxon>
        <taxon>Chlorobiales</taxon>
        <taxon>Chlorobiaceae</taxon>
        <taxon>Chlorobium/Pelodictyon group</taxon>
        <taxon>Chlorobium</taxon>
    </lineage>
</organism>
<protein>
    <recommendedName>
        <fullName evidence="1">DNA repair protein RecO</fullName>
    </recommendedName>
    <alternativeName>
        <fullName evidence="1">Recombination protein O</fullName>
    </alternativeName>
</protein>
<feature type="chain" id="PRO_1000099368" description="DNA repair protein RecO">
    <location>
        <begin position="1"/>
        <end position="261"/>
    </location>
</feature>
<comment type="function">
    <text evidence="1">Involved in DNA repair and RecF pathway recombination.</text>
</comment>
<comment type="similarity">
    <text evidence="1">Belongs to the RecO family.</text>
</comment>
<name>RECO_CHLL2</name>